<dbReference type="EC" id="2.7.4.3"/>
<dbReference type="EMBL" id="AF047722">
    <property type="protein sequence ID" value="AAC28787.1"/>
    <property type="molecule type" value="Genomic_DNA"/>
</dbReference>
<dbReference type="GO" id="GO:0005737">
    <property type="term" value="C:cytoplasm"/>
    <property type="evidence" value="ECO:0007669"/>
    <property type="project" value="UniProtKB-SubCell"/>
</dbReference>
<dbReference type="GO" id="GO:0004017">
    <property type="term" value="F:adenylate kinase activity"/>
    <property type="evidence" value="ECO:0007669"/>
    <property type="project" value="UniProtKB-EC"/>
</dbReference>
<dbReference type="GO" id="GO:0005524">
    <property type="term" value="F:ATP binding"/>
    <property type="evidence" value="ECO:0007669"/>
    <property type="project" value="UniProtKB-KW"/>
</dbReference>
<dbReference type="CDD" id="cd01428">
    <property type="entry name" value="ADK"/>
    <property type="match status" value="1"/>
</dbReference>
<dbReference type="CDD" id="cd22981">
    <property type="entry name" value="DD_TbAK-like"/>
    <property type="match status" value="1"/>
</dbReference>
<dbReference type="Gene3D" id="3.40.50.300">
    <property type="entry name" value="P-loop containing nucleotide triphosphate hydrolases"/>
    <property type="match status" value="1"/>
</dbReference>
<dbReference type="HAMAP" id="MF_00235">
    <property type="entry name" value="Adenylate_kinase_Adk"/>
    <property type="match status" value="1"/>
</dbReference>
<dbReference type="InterPro" id="IPR000850">
    <property type="entry name" value="Adenylat/UMP-CMP_kin"/>
</dbReference>
<dbReference type="InterPro" id="IPR027417">
    <property type="entry name" value="P-loop_NTPase"/>
</dbReference>
<dbReference type="PANTHER" id="PTHR23359">
    <property type="entry name" value="NUCLEOTIDE KINASE"/>
    <property type="match status" value="1"/>
</dbReference>
<dbReference type="Pfam" id="PF00406">
    <property type="entry name" value="ADK"/>
    <property type="match status" value="1"/>
</dbReference>
<dbReference type="PRINTS" id="PR00094">
    <property type="entry name" value="ADENYLTKNASE"/>
</dbReference>
<dbReference type="SUPFAM" id="SSF47391">
    <property type="entry name" value="Dimerization-anchoring domain of cAMP-dependent PK regulatory subunit"/>
    <property type="match status" value="1"/>
</dbReference>
<dbReference type="SUPFAM" id="SSF52540">
    <property type="entry name" value="P-loop containing nucleoside triphosphate hydrolases"/>
    <property type="match status" value="1"/>
</dbReference>
<reference key="1">
    <citation type="journal article" date="1998" name="Nucleic Acids Res.">
        <title>Physical and transcriptional analysis of the Trypanosoma brucei genome reveals a typical eukaryotic arrangement with close interspersion of RNA polymerase II- and III-transcribed genes.</title>
        <authorList>
            <person name="Marchetti M.A."/>
            <person name="Tschudi C."/>
            <person name="Silva E."/>
            <person name="Ullu E."/>
        </authorList>
    </citation>
    <scope>NUCLEOTIDE SEQUENCE [GENOMIC DNA]</scope>
    <source>
        <strain>Ytat 1.1</strain>
    </source>
</reference>
<feature type="chain" id="PRO_0000158938" description="Adenylate kinase">
    <location>
        <begin position="1"/>
        <end position="209"/>
    </location>
</feature>
<feature type="region of interest" description="NMP" evidence="1">
    <location>
        <begin position="79"/>
        <end position="108"/>
    </location>
</feature>
<feature type="region of interest" description="LID" evidence="1">
    <location>
        <begin position="172"/>
        <end position="205"/>
    </location>
</feature>
<feature type="binding site" evidence="1">
    <location>
        <begin position="59"/>
        <end position="64"/>
    </location>
    <ligand>
        <name>ATP</name>
        <dbReference type="ChEBI" id="CHEBI:30616"/>
    </ligand>
</feature>
<feature type="binding site" evidence="1">
    <location>
        <position position="80"/>
    </location>
    <ligand>
        <name>AMP</name>
        <dbReference type="ChEBI" id="CHEBI:456215"/>
    </ligand>
</feature>
<feature type="binding site" evidence="1">
    <location>
        <begin position="106"/>
        <end position="108"/>
    </location>
    <ligand>
        <name>AMP</name>
        <dbReference type="ChEBI" id="CHEBI:456215"/>
    </ligand>
</feature>
<feature type="binding site" evidence="1">
    <location>
        <begin position="135"/>
        <end position="138"/>
    </location>
    <ligand>
        <name>AMP</name>
        <dbReference type="ChEBI" id="CHEBI:456215"/>
    </ligand>
</feature>
<feature type="binding site" evidence="1">
    <location>
        <position position="142"/>
    </location>
    <ligand>
        <name>AMP</name>
        <dbReference type="ChEBI" id="CHEBI:456215"/>
    </ligand>
</feature>
<feature type="binding site" evidence="1">
    <location>
        <position position="173"/>
    </location>
    <ligand>
        <name>ATP</name>
        <dbReference type="ChEBI" id="CHEBI:30616"/>
    </ligand>
</feature>
<accession>O61069</accession>
<name>KAD_TRYBR</name>
<comment type="function">
    <text evidence="1">Catalyzes the reversible transfer of the terminal phosphate group between ATP and AMP. Plays an important role in cellular energy homeostasis and in adenine nucleotide metabolism.</text>
</comment>
<comment type="catalytic activity">
    <reaction evidence="1">
        <text>AMP + ATP = 2 ADP</text>
        <dbReference type="Rhea" id="RHEA:12973"/>
        <dbReference type="ChEBI" id="CHEBI:30616"/>
        <dbReference type="ChEBI" id="CHEBI:456215"/>
        <dbReference type="ChEBI" id="CHEBI:456216"/>
        <dbReference type="EC" id="2.7.4.3"/>
    </reaction>
</comment>
<comment type="subunit">
    <text evidence="1">Monomer.</text>
</comment>
<comment type="subcellular location">
    <subcellularLocation>
        <location evidence="1">Cytoplasm</location>
    </subcellularLocation>
</comment>
<comment type="similarity">
    <text evidence="2">Belongs to the adenylate kinase family.</text>
</comment>
<sequence length="209" mass="23283">MAVLSEDVLLYLKEKNIPMLFEQIVQNIISDAPERPMSYIGDLMRRGIPLQIFIAGPAGSGKRTQCKNIADRLGVVLISSGQVLTRGVESGSETSQLAHSYVSRGERVPDTLVSMIMKDRLSQSDACEKGWLVEGYPRNAQQAQAVEECGVIPQVFILLDLPEDLSFRRLEHRRYDPATNKXYHMLDNPPPGGRCRVMRTAPAEGCKFP</sequence>
<evidence type="ECO:0000250" key="1">
    <source>
        <dbReference type="UniProtKB" id="P69441"/>
    </source>
</evidence>
<evidence type="ECO:0000305" key="2"/>
<proteinExistence type="inferred from homology"/>
<organism>
    <name type="scientific">Trypanosoma brucei rhodesiense</name>
    <dbReference type="NCBI Taxonomy" id="31286"/>
    <lineage>
        <taxon>Eukaryota</taxon>
        <taxon>Discoba</taxon>
        <taxon>Euglenozoa</taxon>
        <taxon>Kinetoplastea</taxon>
        <taxon>Metakinetoplastina</taxon>
        <taxon>Trypanosomatida</taxon>
        <taxon>Trypanosomatidae</taxon>
        <taxon>Trypanosoma</taxon>
    </lineage>
</organism>
<keyword id="KW-0067">ATP-binding</keyword>
<keyword id="KW-0963">Cytoplasm</keyword>
<keyword id="KW-0418">Kinase</keyword>
<keyword id="KW-0547">Nucleotide-binding</keyword>
<keyword id="KW-0808">Transferase</keyword>
<protein>
    <recommendedName>
        <fullName>Adenylate kinase</fullName>
        <shortName>AK</shortName>
        <ecNumber>2.7.4.3</ecNumber>
    </recommendedName>
    <alternativeName>
        <fullName>ATP-AMP transphosphorylase</fullName>
    </alternativeName>
    <alternativeName>
        <fullName>ATP:AMP phosphotransferase</fullName>
    </alternativeName>
    <alternativeName>
        <fullName>Adenylate monophosphate kinase</fullName>
    </alternativeName>
</protein>